<feature type="chain" id="PRO_1000054067" description="Cyclic pyranopterin monophosphate synthase">
    <location>
        <begin position="1"/>
        <end position="161"/>
    </location>
</feature>
<feature type="active site" evidence="1">
    <location>
        <position position="130"/>
    </location>
</feature>
<feature type="binding site" evidence="1">
    <location>
        <begin position="75"/>
        <end position="77"/>
    </location>
    <ligand>
        <name>substrate</name>
    </ligand>
</feature>
<feature type="binding site" evidence="1">
    <location>
        <begin position="115"/>
        <end position="116"/>
    </location>
    <ligand>
        <name>substrate</name>
    </ligand>
</feature>
<reference key="1">
    <citation type="journal article" date="2003" name="Nature">
        <title>Genome sequence of Bacillus cereus and comparative analysis with Bacillus anthracis.</title>
        <authorList>
            <person name="Ivanova N."/>
            <person name="Sorokin A."/>
            <person name="Anderson I."/>
            <person name="Galleron N."/>
            <person name="Candelon B."/>
            <person name="Kapatral V."/>
            <person name="Bhattacharyya A."/>
            <person name="Reznik G."/>
            <person name="Mikhailova N."/>
            <person name="Lapidus A."/>
            <person name="Chu L."/>
            <person name="Mazur M."/>
            <person name="Goltsman E."/>
            <person name="Larsen N."/>
            <person name="D'Souza M."/>
            <person name="Walunas T."/>
            <person name="Grechkin Y."/>
            <person name="Pusch G."/>
            <person name="Haselkorn R."/>
            <person name="Fonstein M."/>
            <person name="Ehrlich S.D."/>
            <person name="Overbeek R."/>
            <person name="Kyrpides N.C."/>
        </authorList>
    </citation>
    <scope>NUCLEOTIDE SEQUENCE [LARGE SCALE GENOMIC DNA]</scope>
    <source>
        <strain>ATCC 14579 / DSM 31 / CCUG 7414 / JCM 2152 / NBRC 15305 / NCIMB 9373 / NCTC 2599 / NRRL B-3711</strain>
    </source>
</reference>
<protein>
    <recommendedName>
        <fullName evidence="1">Cyclic pyranopterin monophosphate synthase</fullName>
        <ecNumber evidence="1">4.6.1.17</ecNumber>
    </recommendedName>
    <alternativeName>
        <fullName evidence="1">Molybdenum cofactor biosynthesis protein C</fullName>
    </alternativeName>
</protein>
<dbReference type="EC" id="4.6.1.17" evidence="1"/>
<dbReference type="EMBL" id="AE016877">
    <property type="protein sequence ID" value="AAP11627.1"/>
    <property type="molecule type" value="Genomic_DNA"/>
</dbReference>
<dbReference type="RefSeq" id="NP_834426.1">
    <property type="nucleotide sequence ID" value="NC_004722.1"/>
</dbReference>
<dbReference type="RefSeq" id="WP_000094146.1">
    <property type="nucleotide sequence ID" value="NZ_CP138336.1"/>
</dbReference>
<dbReference type="SMR" id="Q816U4"/>
<dbReference type="STRING" id="226900.BC_4722"/>
<dbReference type="GeneID" id="67469015"/>
<dbReference type="KEGG" id="bce:BC4722"/>
<dbReference type="PATRIC" id="fig|226900.8.peg.4884"/>
<dbReference type="HOGENOM" id="CLU_074693_1_1_9"/>
<dbReference type="OrthoDB" id="9794429at2"/>
<dbReference type="UniPathway" id="UPA00344"/>
<dbReference type="Proteomes" id="UP000001417">
    <property type="component" value="Chromosome"/>
</dbReference>
<dbReference type="GO" id="GO:0061799">
    <property type="term" value="F:cyclic pyranopterin monophosphate synthase activity"/>
    <property type="evidence" value="ECO:0007669"/>
    <property type="project" value="UniProtKB-UniRule"/>
</dbReference>
<dbReference type="GO" id="GO:0006777">
    <property type="term" value="P:Mo-molybdopterin cofactor biosynthetic process"/>
    <property type="evidence" value="ECO:0007669"/>
    <property type="project" value="UniProtKB-UniRule"/>
</dbReference>
<dbReference type="CDD" id="cd01420">
    <property type="entry name" value="MoaC_PE"/>
    <property type="match status" value="1"/>
</dbReference>
<dbReference type="Gene3D" id="3.30.70.640">
    <property type="entry name" value="Molybdopterin cofactor biosynthesis C (MoaC) domain"/>
    <property type="match status" value="1"/>
</dbReference>
<dbReference type="HAMAP" id="MF_01224_B">
    <property type="entry name" value="MoaC_B"/>
    <property type="match status" value="1"/>
</dbReference>
<dbReference type="InterPro" id="IPR023045">
    <property type="entry name" value="MoaC"/>
</dbReference>
<dbReference type="InterPro" id="IPR047594">
    <property type="entry name" value="MoaC_bact/euk"/>
</dbReference>
<dbReference type="InterPro" id="IPR036522">
    <property type="entry name" value="MoaC_sf"/>
</dbReference>
<dbReference type="InterPro" id="IPR050105">
    <property type="entry name" value="MoCo_biosynth_MoaA/MoaC"/>
</dbReference>
<dbReference type="InterPro" id="IPR002820">
    <property type="entry name" value="Mopterin_CF_biosynth-C_dom"/>
</dbReference>
<dbReference type="NCBIfam" id="TIGR00581">
    <property type="entry name" value="moaC"/>
    <property type="match status" value="1"/>
</dbReference>
<dbReference type="NCBIfam" id="NF006870">
    <property type="entry name" value="PRK09364.1"/>
    <property type="match status" value="1"/>
</dbReference>
<dbReference type="PANTHER" id="PTHR22960:SF29">
    <property type="entry name" value="CYCLIC PYRANOPTERIN MONOPHOSPHATE SYNTHASE"/>
    <property type="match status" value="1"/>
</dbReference>
<dbReference type="PANTHER" id="PTHR22960">
    <property type="entry name" value="MOLYBDOPTERIN COFACTOR SYNTHESIS PROTEIN A"/>
    <property type="match status" value="1"/>
</dbReference>
<dbReference type="Pfam" id="PF01967">
    <property type="entry name" value="MoaC"/>
    <property type="match status" value="1"/>
</dbReference>
<dbReference type="SUPFAM" id="SSF55040">
    <property type="entry name" value="Molybdenum cofactor biosynthesis protein C, MoaC"/>
    <property type="match status" value="1"/>
</dbReference>
<name>MOAC_BACCR</name>
<accession>Q816U4</accession>
<organism>
    <name type="scientific">Bacillus cereus (strain ATCC 14579 / DSM 31 / CCUG 7414 / JCM 2152 / NBRC 15305 / NCIMB 9373 / NCTC 2599 / NRRL B-3711)</name>
    <dbReference type="NCBI Taxonomy" id="226900"/>
    <lineage>
        <taxon>Bacteria</taxon>
        <taxon>Bacillati</taxon>
        <taxon>Bacillota</taxon>
        <taxon>Bacilli</taxon>
        <taxon>Bacillales</taxon>
        <taxon>Bacillaceae</taxon>
        <taxon>Bacillus</taxon>
        <taxon>Bacillus cereus group</taxon>
    </lineage>
</organism>
<evidence type="ECO:0000255" key="1">
    <source>
        <dbReference type="HAMAP-Rule" id="MF_01224"/>
    </source>
</evidence>
<proteinExistence type="inferred from homology"/>
<sequence>MSSFTHFNDQGRAKMVDISDKKATVRTAIACSSIVVTKEIYDKISHNEIGKGDVLAVAQIAGIMAAKRTSDIIPMCHPLLLKGVDVSFDWKQSEEQYRLLIEVKVKTEGSTGVEMEALTAASATALTVYDMCKAVDKGMIIGETYLLEKTGGKSGDYTRNS</sequence>
<keyword id="KW-0456">Lyase</keyword>
<keyword id="KW-0501">Molybdenum cofactor biosynthesis</keyword>
<keyword id="KW-1185">Reference proteome</keyword>
<comment type="function">
    <text evidence="1">Catalyzes the conversion of (8S)-3',8-cyclo-7,8-dihydroguanosine 5'-triphosphate to cyclic pyranopterin monophosphate (cPMP).</text>
</comment>
<comment type="catalytic activity">
    <reaction evidence="1">
        <text>(8S)-3',8-cyclo-7,8-dihydroguanosine 5'-triphosphate = cyclic pyranopterin phosphate + diphosphate</text>
        <dbReference type="Rhea" id="RHEA:49580"/>
        <dbReference type="ChEBI" id="CHEBI:33019"/>
        <dbReference type="ChEBI" id="CHEBI:59648"/>
        <dbReference type="ChEBI" id="CHEBI:131766"/>
        <dbReference type="EC" id="4.6.1.17"/>
    </reaction>
</comment>
<comment type="pathway">
    <text evidence="1">Cofactor biosynthesis; molybdopterin biosynthesis.</text>
</comment>
<comment type="subunit">
    <text evidence="1">Homohexamer; trimer of dimers.</text>
</comment>
<comment type="similarity">
    <text evidence="1">Belongs to the MoaC family.</text>
</comment>
<gene>
    <name evidence="1" type="primary">moaC</name>
    <name type="ordered locus">BC_4722</name>
</gene>